<gene>
    <name evidence="1" type="primary">leuA</name>
    <name type="ordered locus">ASA_3409</name>
</gene>
<sequence length="524" mass="57248">MSDRVIIFDTTLRDGEQALAASLTVKEKLQIAQALERLGVDIMEVGFPVSSPGDFQSVQTIARHIKNSRVCALARALPQDIDAAGEALRVAEAFRIHTFISTSSIHVESKLKKSFEDVLEMGVSAIKHALRYTDDVEFSCEDAGRTPIDNLCRMVEAAIKAGARTINIPDTVGYTVPTEFSGIIQTLFNRVPNIDKAIISVHCHDDLGLSVANSIGAVQMGARQIECTINGIGERAGNCSLEEVAMILKTRADLLGVHTNIRHSEIHRTSALVSQLCNMPVQPNKAIVGANAFSHSSGIHQDGVLKAKNTYEIITPESIGLPQNNLNMTSRSGRHVIKHRMESMGYAESSYDLDHLYGKFLTLADKKGQVFDYDLEALAFFSQIHEEPEHFKLEYLGVQSGSSVLATASVKLKVGQDLVCEAATGNGPVDAVYQCINRITGYEIRIDKYALKAKGEGKNALGQVDIVAEYKGRKFHGMGLATDIIESSAQALIHVINSIWRADQVAEQMERNVTKTDKINTESV</sequence>
<accession>A4SR62</accession>
<organism>
    <name type="scientific">Aeromonas salmonicida (strain A449)</name>
    <dbReference type="NCBI Taxonomy" id="382245"/>
    <lineage>
        <taxon>Bacteria</taxon>
        <taxon>Pseudomonadati</taxon>
        <taxon>Pseudomonadota</taxon>
        <taxon>Gammaproteobacteria</taxon>
        <taxon>Aeromonadales</taxon>
        <taxon>Aeromonadaceae</taxon>
        <taxon>Aeromonas</taxon>
    </lineage>
</organism>
<protein>
    <recommendedName>
        <fullName evidence="1">2-isopropylmalate synthase</fullName>
        <ecNumber evidence="1">2.3.3.13</ecNumber>
    </recommendedName>
    <alternativeName>
        <fullName evidence="1">Alpha-IPM synthase</fullName>
    </alternativeName>
    <alternativeName>
        <fullName evidence="1">Alpha-isopropylmalate synthase</fullName>
    </alternativeName>
</protein>
<dbReference type="EC" id="2.3.3.13" evidence="1"/>
<dbReference type="EMBL" id="CP000644">
    <property type="protein sequence ID" value="ABO91384.1"/>
    <property type="molecule type" value="Genomic_DNA"/>
</dbReference>
<dbReference type="RefSeq" id="WP_005311593.1">
    <property type="nucleotide sequence ID" value="NC_009348.1"/>
</dbReference>
<dbReference type="SMR" id="A4SR62"/>
<dbReference type="STRING" id="29491.GCA_000820065_03804"/>
<dbReference type="KEGG" id="asa:ASA_3409"/>
<dbReference type="eggNOG" id="COG0119">
    <property type="taxonomic scope" value="Bacteria"/>
</dbReference>
<dbReference type="HOGENOM" id="CLU_022158_0_1_6"/>
<dbReference type="UniPathway" id="UPA00048">
    <property type="reaction ID" value="UER00070"/>
</dbReference>
<dbReference type="Proteomes" id="UP000000225">
    <property type="component" value="Chromosome"/>
</dbReference>
<dbReference type="GO" id="GO:0005829">
    <property type="term" value="C:cytosol"/>
    <property type="evidence" value="ECO:0007669"/>
    <property type="project" value="TreeGrafter"/>
</dbReference>
<dbReference type="GO" id="GO:0003852">
    <property type="term" value="F:2-isopropylmalate synthase activity"/>
    <property type="evidence" value="ECO:0007669"/>
    <property type="project" value="UniProtKB-UniRule"/>
</dbReference>
<dbReference type="GO" id="GO:0003985">
    <property type="term" value="F:acetyl-CoA C-acetyltransferase activity"/>
    <property type="evidence" value="ECO:0007669"/>
    <property type="project" value="UniProtKB-UniRule"/>
</dbReference>
<dbReference type="GO" id="GO:0030145">
    <property type="term" value="F:manganese ion binding"/>
    <property type="evidence" value="ECO:0007669"/>
    <property type="project" value="UniProtKB-UniRule"/>
</dbReference>
<dbReference type="GO" id="GO:0009098">
    <property type="term" value="P:L-leucine biosynthetic process"/>
    <property type="evidence" value="ECO:0007669"/>
    <property type="project" value="UniProtKB-UniRule"/>
</dbReference>
<dbReference type="CDD" id="cd07940">
    <property type="entry name" value="DRE_TIM_IPMS"/>
    <property type="match status" value="1"/>
</dbReference>
<dbReference type="FunFam" id="1.10.238.260:FF:000001">
    <property type="entry name" value="2-isopropylmalate synthase"/>
    <property type="match status" value="1"/>
</dbReference>
<dbReference type="FunFam" id="3.20.20.70:FF:000010">
    <property type="entry name" value="2-isopropylmalate synthase"/>
    <property type="match status" value="1"/>
</dbReference>
<dbReference type="FunFam" id="3.30.160.270:FF:000001">
    <property type="entry name" value="2-isopropylmalate synthase"/>
    <property type="match status" value="1"/>
</dbReference>
<dbReference type="Gene3D" id="1.10.238.260">
    <property type="match status" value="1"/>
</dbReference>
<dbReference type="Gene3D" id="3.30.160.270">
    <property type="match status" value="1"/>
</dbReference>
<dbReference type="Gene3D" id="3.20.20.70">
    <property type="entry name" value="Aldolase class I"/>
    <property type="match status" value="1"/>
</dbReference>
<dbReference type="HAMAP" id="MF_01025">
    <property type="entry name" value="LeuA_type1"/>
    <property type="match status" value="1"/>
</dbReference>
<dbReference type="InterPro" id="IPR050073">
    <property type="entry name" value="2-IPM_HCS-like"/>
</dbReference>
<dbReference type="InterPro" id="IPR013709">
    <property type="entry name" value="2-isopropylmalate_synth_dimer"/>
</dbReference>
<dbReference type="InterPro" id="IPR002034">
    <property type="entry name" value="AIPM/Hcit_synth_CS"/>
</dbReference>
<dbReference type="InterPro" id="IPR013785">
    <property type="entry name" value="Aldolase_TIM"/>
</dbReference>
<dbReference type="InterPro" id="IPR054691">
    <property type="entry name" value="LeuA/HCS_post-cat"/>
</dbReference>
<dbReference type="InterPro" id="IPR036230">
    <property type="entry name" value="LeuA_allosteric_dom_sf"/>
</dbReference>
<dbReference type="InterPro" id="IPR005671">
    <property type="entry name" value="LeuA_bact_synth"/>
</dbReference>
<dbReference type="InterPro" id="IPR000891">
    <property type="entry name" value="PYR_CT"/>
</dbReference>
<dbReference type="NCBIfam" id="TIGR00973">
    <property type="entry name" value="leuA_bact"/>
    <property type="match status" value="1"/>
</dbReference>
<dbReference type="NCBIfam" id="NF002084">
    <property type="entry name" value="PRK00915.1-1"/>
    <property type="match status" value="1"/>
</dbReference>
<dbReference type="NCBIfam" id="NF002086">
    <property type="entry name" value="PRK00915.1-3"/>
    <property type="match status" value="1"/>
</dbReference>
<dbReference type="PANTHER" id="PTHR10277:SF9">
    <property type="entry name" value="2-ISOPROPYLMALATE SYNTHASE 1, CHLOROPLASTIC-RELATED"/>
    <property type="match status" value="1"/>
</dbReference>
<dbReference type="PANTHER" id="PTHR10277">
    <property type="entry name" value="HOMOCITRATE SYNTHASE-RELATED"/>
    <property type="match status" value="1"/>
</dbReference>
<dbReference type="Pfam" id="PF22617">
    <property type="entry name" value="HCS_D2"/>
    <property type="match status" value="1"/>
</dbReference>
<dbReference type="Pfam" id="PF00682">
    <property type="entry name" value="HMGL-like"/>
    <property type="match status" value="1"/>
</dbReference>
<dbReference type="Pfam" id="PF08502">
    <property type="entry name" value="LeuA_dimer"/>
    <property type="match status" value="1"/>
</dbReference>
<dbReference type="SMART" id="SM00917">
    <property type="entry name" value="LeuA_dimer"/>
    <property type="match status" value="1"/>
</dbReference>
<dbReference type="SUPFAM" id="SSF110921">
    <property type="entry name" value="2-isopropylmalate synthase LeuA, allosteric (dimerisation) domain"/>
    <property type="match status" value="1"/>
</dbReference>
<dbReference type="SUPFAM" id="SSF51569">
    <property type="entry name" value="Aldolase"/>
    <property type="match status" value="1"/>
</dbReference>
<dbReference type="PROSITE" id="PS00815">
    <property type="entry name" value="AIPM_HOMOCIT_SYNTH_1"/>
    <property type="match status" value="1"/>
</dbReference>
<dbReference type="PROSITE" id="PS00816">
    <property type="entry name" value="AIPM_HOMOCIT_SYNTH_2"/>
    <property type="match status" value="1"/>
</dbReference>
<dbReference type="PROSITE" id="PS50991">
    <property type="entry name" value="PYR_CT"/>
    <property type="match status" value="1"/>
</dbReference>
<reference key="1">
    <citation type="journal article" date="2008" name="BMC Genomics">
        <title>The genome of Aeromonas salmonicida subsp. salmonicida A449: insights into the evolution of a fish pathogen.</title>
        <authorList>
            <person name="Reith M.E."/>
            <person name="Singh R.K."/>
            <person name="Curtis B."/>
            <person name="Boyd J.M."/>
            <person name="Bouevitch A."/>
            <person name="Kimball J."/>
            <person name="Munholland J."/>
            <person name="Murphy C."/>
            <person name="Sarty D."/>
            <person name="Williams J."/>
            <person name="Nash J.H."/>
            <person name="Johnson S.C."/>
            <person name="Brown L.L."/>
        </authorList>
    </citation>
    <scope>NUCLEOTIDE SEQUENCE [LARGE SCALE GENOMIC DNA]</scope>
    <source>
        <strain>A449</strain>
    </source>
</reference>
<keyword id="KW-0028">Amino-acid biosynthesis</keyword>
<keyword id="KW-0100">Branched-chain amino acid biosynthesis</keyword>
<keyword id="KW-0963">Cytoplasm</keyword>
<keyword id="KW-0432">Leucine biosynthesis</keyword>
<keyword id="KW-0464">Manganese</keyword>
<keyword id="KW-0479">Metal-binding</keyword>
<keyword id="KW-0808">Transferase</keyword>
<evidence type="ECO:0000255" key="1">
    <source>
        <dbReference type="HAMAP-Rule" id="MF_01025"/>
    </source>
</evidence>
<feature type="chain" id="PRO_1000149119" description="2-isopropylmalate synthase">
    <location>
        <begin position="1"/>
        <end position="524"/>
    </location>
</feature>
<feature type="domain" description="Pyruvate carboxyltransferase" evidence="1">
    <location>
        <begin position="5"/>
        <end position="267"/>
    </location>
</feature>
<feature type="region of interest" description="Regulatory domain" evidence="1">
    <location>
        <begin position="392"/>
        <end position="524"/>
    </location>
</feature>
<feature type="binding site" evidence="1">
    <location>
        <position position="14"/>
    </location>
    <ligand>
        <name>Mn(2+)</name>
        <dbReference type="ChEBI" id="CHEBI:29035"/>
    </ligand>
</feature>
<feature type="binding site" evidence="1">
    <location>
        <position position="202"/>
    </location>
    <ligand>
        <name>Mn(2+)</name>
        <dbReference type="ChEBI" id="CHEBI:29035"/>
    </ligand>
</feature>
<feature type="binding site" evidence="1">
    <location>
        <position position="204"/>
    </location>
    <ligand>
        <name>Mn(2+)</name>
        <dbReference type="ChEBI" id="CHEBI:29035"/>
    </ligand>
</feature>
<feature type="binding site" evidence="1">
    <location>
        <position position="238"/>
    </location>
    <ligand>
        <name>Mn(2+)</name>
        <dbReference type="ChEBI" id="CHEBI:29035"/>
    </ligand>
</feature>
<name>LEU1_AERS4</name>
<proteinExistence type="inferred from homology"/>
<comment type="function">
    <text evidence="1">Catalyzes the condensation of the acetyl group of acetyl-CoA with 3-methyl-2-oxobutanoate (2-ketoisovalerate) to form 3-carboxy-3-hydroxy-4-methylpentanoate (2-isopropylmalate).</text>
</comment>
<comment type="catalytic activity">
    <reaction evidence="1">
        <text>3-methyl-2-oxobutanoate + acetyl-CoA + H2O = (2S)-2-isopropylmalate + CoA + H(+)</text>
        <dbReference type="Rhea" id="RHEA:21524"/>
        <dbReference type="ChEBI" id="CHEBI:1178"/>
        <dbReference type="ChEBI" id="CHEBI:11851"/>
        <dbReference type="ChEBI" id="CHEBI:15377"/>
        <dbReference type="ChEBI" id="CHEBI:15378"/>
        <dbReference type="ChEBI" id="CHEBI:57287"/>
        <dbReference type="ChEBI" id="CHEBI:57288"/>
        <dbReference type="EC" id="2.3.3.13"/>
    </reaction>
</comment>
<comment type="cofactor">
    <cofactor evidence="1">
        <name>Mn(2+)</name>
        <dbReference type="ChEBI" id="CHEBI:29035"/>
    </cofactor>
</comment>
<comment type="pathway">
    <text evidence="1">Amino-acid biosynthesis; L-leucine biosynthesis; L-leucine from 3-methyl-2-oxobutanoate: step 1/4.</text>
</comment>
<comment type="subunit">
    <text evidence="1">Homodimer.</text>
</comment>
<comment type="subcellular location">
    <subcellularLocation>
        <location evidence="1">Cytoplasm</location>
    </subcellularLocation>
</comment>
<comment type="similarity">
    <text evidence="1">Belongs to the alpha-IPM synthase/homocitrate synthase family. LeuA type 1 subfamily.</text>
</comment>